<evidence type="ECO:0000255" key="1">
    <source>
        <dbReference type="HAMAP-Rule" id="MF_00017"/>
    </source>
</evidence>
<protein>
    <recommendedName>
        <fullName evidence="1">Recombination protein RecR</fullName>
    </recommendedName>
</protein>
<accession>Q3B3D7</accession>
<organism>
    <name type="scientific">Chlorobium luteolum (strain DSM 273 / BCRC 81028 / 2530)</name>
    <name type="common">Pelodictyon luteolum</name>
    <dbReference type="NCBI Taxonomy" id="319225"/>
    <lineage>
        <taxon>Bacteria</taxon>
        <taxon>Pseudomonadati</taxon>
        <taxon>Chlorobiota</taxon>
        <taxon>Chlorobiia</taxon>
        <taxon>Chlorobiales</taxon>
        <taxon>Chlorobiaceae</taxon>
        <taxon>Chlorobium/Pelodictyon group</taxon>
        <taxon>Pelodictyon</taxon>
    </lineage>
</organism>
<proteinExistence type="inferred from homology"/>
<sequence>MQYSSSSIEALIDAFSRLPGVGRKTARRLAMYVLQQPRLEAERLARALIDVKDRVIRCSVCQNVTDREEDPCSICTSQGRDRTVICVVESPVDVLAFEKTGHYRGLYHVLHGVISPLDGVGPDDIKIRELLGRLSPEGIGGVREIVLALNPTIEGETTSLYLSRLLKPLGVEVTKIARGIPVGAELEFIDEATLSRAMEGRSAV</sequence>
<keyword id="KW-0227">DNA damage</keyword>
<keyword id="KW-0233">DNA recombination</keyword>
<keyword id="KW-0234">DNA repair</keyword>
<keyword id="KW-0479">Metal-binding</keyword>
<keyword id="KW-1185">Reference proteome</keyword>
<keyword id="KW-0862">Zinc</keyword>
<keyword id="KW-0863">Zinc-finger</keyword>
<reference key="1">
    <citation type="submission" date="2005-08" db="EMBL/GenBank/DDBJ databases">
        <title>Complete sequence of Pelodictyon luteolum DSM 273.</title>
        <authorList>
            <consortium name="US DOE Joint Genome Institute"/>
            <person name="Copeland A."/>
            <person name="Lucas S."/>
            <person name="Lapidus A."/>
            <person name="Barry K."/>
            <person name="Detter J.C."/>
            <person name="Glavina T."/>
            <person name="Hammon N."/>
            <person name="Israni S."/>
            <person name="Pitluck S."/>
            <person name="Bryant D."/>
            <person name="Schmutz J."/>
            <person name="Larimer F."/>
            <person name="Land M."/>
            <person name="Kyrpides N."/>
            <person name="Ivanova N."/>
            <person name="Richardson P."/>
        </authorList>
    </citation>
    <scope>NUCLEOTIDE SEQUENCE [LARGE SCALE GENOMIC DNA]</scope>
    <source>
        <strain>DSM 273 / BCRC 81028 / 2530</strain>
    </source>
</reference>
<gene>
    <name evidence="1" type="primary">recR</name>
    <name type="ordered locus">Plut_1284</name>
</gene>
<name>RECR_CHLL3</name>
<comment type="function">
    <text evidence="1">May play a role in DNA repair. It seems to be involved in an RecBC-independent recombinational process of DNA repair. It may act with RecF and RecO.</text>
</comment>
<comment type="similarity">
    <text evidence="1">Belongs to the RecR family.</text>
</comment>
<feature type="chain" id="PRO_1000001574" description="Recombination protein RecR">
    <location>
        <begin position="1"/>
        <end position="204"/>
    </location>
</feature>
<feature type="domain" description="Toprim" evidence="1">
    <location>
        <begin position="83"/>
        <end position="181"/>
    </location>
</feature>
<feature type="zinc finger region" description="C4-type" evidence="1">
    <location>
        <begin position="58"/>
        <end position="75"/>
    </location>
</feature>
<dbReference type="EMBL" id="CP000096">
    <property type="protein sequence ID" value="ABB24144.1"/>
    <property type="molecule type" value="Genomic_DNA"/>
</dbReference>
<dbReference type="RefSeq" id="WP_011358016.1">
    <property type="nucleotide sequence ID" value="NC_007512.1"/>
</dbReference>
<dbReference type="SMR" id="Q3B3D7"/>
<dbReference type="STRING" id="319225.Plut_1284"/>
<dbReference type="KEGG" id="plt:Plut_1284"/>
<dbReference type="eggNOG" id="COG0353">
    <property type="taxonomic scope" value="Bacteria"/>
</dbReference>
<dbReference type="HOGENOM" id="CLU_060739_1_0_10"/>
<dbReference type="OrthoDB" id="9802672at2"/>
<dbReference type="Proteomes" id="UP000002709">
    <property type="component" value="Chromosome"/>
</dbReference>
<dbReference type="GO" id="GO:0003677">
    <property type="term" value="F:DNA binding"/>
    <property type="evidence" value="ECO:0007669"/>
    <property type="project" value="UniProtKB-UniRule"/>
</dbReference>
<dbReference type="GO" id="GO:0008270">
    <property type="term" value="F:zinc ion binding"/>
    <property type="evidence" value="ECO:0007669"/>
    <property type="project" value="UniProtKB-KW"/>
</dbReference>
<dbReference type="GO" id="GO:0006310">
    <property type="term" value="P:DNA recombination"/>
    <property type="evidence" value="ECO:0007669"/>
    <property type="project" value="UniProtKB-UniRule"/>
</dbReference>
<dbReference type="GO" id="GO:0006281">
    <property type="term" value="P:DNA repair"/>
    <property type="evidence" value="ECO:0007669"/>
    <property type="project" value="UniProtKB-UniRule"/>
</dbReference>
<dbReference type="CDD" id="cd01025">
    <property type="entry name" value="TOPRIM_recR"/>
    <property type="match status" value="1"/>
</dbReference>
<dbReference type="Gene3D" id="3.40.1360.10">
    <property type="match status" value="1"/>
</dbReference>
<dbReference type="Gene3D" id="6.10.250.240">
    <property type="match status" value="1"/>
</dbReference>
<dbReference type="Gene3D" id="1.10.8.420">
    <property type="entry name" value="RecR Domain 1"/>
    <property type="match status" value="1"/>
</dbReference>
<dbReference type="HAMAP" id="MF_00017">
    <property type="entry name" value="RecR"/>
    <property type="match status" value="1"/>
</dbReference>
<dbReference type="InterPro" id="IPR000093">
    <property type="entry name" value="DNA_Rcmb_RecR"/>
</dbReference>
<dbReference type="InterPro" id="IPR023627">
    <property type="entry name" value="Rcmb_RecR"/>
</dbReference>
<dbReference type="InterPro" id="IPR006171">
    <property type="entry name" value="TOPRIM_dom"/>
</dbReference>
<dbReference type="InterPro" id="IPR034137">
    <property type="entry name" value="TOPRIM_RecR"/>
</dbReference>
<dbReference type="NCBIfam" id="TIGR00615">
    <property type="entry name" value="recR"/>
    <property type="match status" value="1"/>
</dbReference>
<dbReference type="PANTHER" id="PTHR30446">
    <property type="entry name" value="RECOMBINATION PROTEIN RECR"/>
    <property type="match status" value="1"/>
</dbReference>
<dbReference type="PANTHER" id="PTHR30446:SF0">
    <property type="entry name" value="RECOMBINATION PROTEIN RECR"/>
    <property type="match status" value="1"/>
</dbReference>
<dbReference type="Pfam" id="PF21175">
    <property type="entry name" value="RecR_C"/>
    <property type="match status" value="1"/>
</dbReference>
<dbReference type="Pfam" id="PF21176">
    <property type="entry name" value="RecR_HhH"/>
    <property type="match status" value="1"/>
</dbReference>
<dbReference type="Pfam" id="PF13662">
    <property type="entry name" value="Toprim_4"/>
    <property type="match status" value="1"/>
</dbReference>
<dbReference type="SMART" id="SM00493">
    <property type="entry name" value="TOPRIM"/>
    <property type="match status" value="1"/>
</dbReference>
<dbReference type="SUPFAM" id="SSF111304">
    <property type="entry name" value="Recombination protein RecR"/>
    <property type="match status" value="1"/>
</dbReference>
<dbReference type="PROSITE" id="PS50880">
    <property type="entry name" value="TOPRIM"/>
    <property type="match status" value="1"/>
</dbReference>